<protein>
    <recommendedName>
        <fullName evidence="1">RNA cytidine acetyltransferase 2</fullName>
        <ecNumber evidence="1">2.3.1.-</ecNumber>
    </recommendedName>
    <alternativeName>
        <fullName evidence="1">18S rRNA cytosine acetyltransferase 2</fullName>
    </alternativeName>
</protein>
<reference key="1">
    <citation type="journal article" date="2000" name="Nature">
        <title>Sequence and analysis of chromosome 3 of the plant Arabidopsis thaliana.</title>
        <authorList>
            <person name="Salanoubat M."/>
            <person name="Lemcke K."/>
            <person name="Rieger M."/>
            <person name="Ansorge W."/>
            <person name="Unseld M."/>
            <person name="Fartmann B."/>
            <person name="Valle G."/>
            <person name="Bloecker H."/>
            <person name="Perez-Alonso M."/>
            <person name="Obermaier B."/>
            <person name="Delseny M."/>
            <person name="Boutry M."/>
            <person name="Grivell L.A."/>
            <person name="Mache R."/>
            <person name="Puigdomenech P."/>
            <person name="De Simone V."/>
            <person name="Choisne N."/>
            <person name="Artiguenave F."/>
            <person name="Robert C."/>
            <person name="Brottier P."/>
            <person name="Wincker P."/>
            <person name="Cattolico L."/>
            <person name="Weissenbach J."/>
            <person name="Saurin W."/>
            <person name="Quetier F."/>
            <person name="Schaefer M."/>
            <person name="Mueller-Auer S."/>
            <person name="Gabel C."/>
            <person name="Fuchs M."/>
            <person name="Benes V."/>
            <person name="Wurmbach E."/>
            <person name="Drzonek H."/>
            <person name="Erfle H."/>
            <person name="Jordan N."/>
            <person name="Bangert S."/>
            <person name="Wiedelmann R."/>
            <person name="Kranz H."/>
            <person name="Voss H."/>
            <person name="Holland R."/>
            <person name="Brandt P."/>
            <person name="Nyakatura G."/>
            <person name="Vezzi A."/>
            <person name="D'Angelo M."/>
            <person name="Pallavicini A."/>
            <person name="Toppo S."/>
            <person name="Simionati B."/>
            <person name="Conrad A."/>
            <person name="Hornischer K."/>
            <person name="Kauer G."/>
            <person name="Loehnert T.-H."/>
            <person name="Nordsiek G."/>
            <person name="Reichelt J."/>
            <person name="Scharfe M."/>
            <person name="Schoen O."/>
            <person name="Bargues M."/>
            <person name="Terol J."/>
            <person name="Climent J."/>
            <person name="Navarro P."/>
            <person name="Collado C."/>
            <person name="Perez-Perez A."/>
            <person name="Ottenwaelder B."/>
            <person name="Duchemin D."/>
            <person name="Cooke R."/>
            <person name="Laudie M."/>
            <person name="Berger-Llauro C."/>
            <person name="Purnelle B."/>
            <person name="Masuy D."/>
            <person name="de Haan M."/>
            <person name="Maarse A.C."/>
            <person name="Alcaraz J.-P."/>
            <person name="Cottet A."/>
            <person name="Casacuberta E."/>
            <person name="Monfort A."/>
            <person name="Argiriou A."/>
            <person name="Flores M."/>
            <person name="Liguori R."/>
            <person name="Vitale D."/>
            <person name="Mannhaupt G."/>
            <person name="Haase D."/>
            <person name="Schoof H."/>
            <person name="Rudd S."/>
            <person name="Zaccaria P."/>
            <person name="Mewes H.-W."/>
            <person name="Mayer K.F.X."/>
            <person name="Kaul S."/>
            <person name="Town C.D."/>
            <person name="Koo H.L."/>
            <person name="Tallon L.J."/>
            <person name="Jenkins J."/>
            <person name="Rooney T."/>
            <person name="Rizzo M."/>
            <person name="Walts A."/>
            <person name="Utterback T."/>
            <person name="Fujii C.Y."/>
            <person name="Shea T.P."/>
            <person name="Creasy T.H."/>
            <person name="Haas B."/>
            <person name="Maiti R."/>
            <person name="Wu D."/>
            <person name="Peterson J."/>
            <person name="Van Aken S."/>
            <person name="Pai G."/>
            <person name="Militscher J."/>
            <person name="Sellers P."/>
            <person name="Gill J.E."/>
            <person name="Feldblyum T.V."/>
            <person name="Preuss D."/>
            <person name="Lin X."/>
            <person name="Nierman W.C."/>
            <person name="Salzberg S.L."/>
            <person name="White O."/>
            <person name="Venter J.C."/>
            <person name="Fraser C.M."/>
            <person name="Kaneko T."/>
            <person name="Nakamura Y."/>
            <person name="Sato S."/>
            <person name="Kato T."/>
            <person name="Asamizu E."/>
            <person name="Sasamoto S."/>
            <person name="Kimura T."/>
            <person name="Idesawa K."/>
            <person name="Kawashima K."/>
            <person name="Kishida Y."/>
            <person name="Kiyokawa C."/>
            <person name="Kohara M."/>
            <person name="Matsumoto M."/>
            <person name="Matsuno A."/>
            <person name="Muraki A."/>
            <person name="Nakayama S."/>
            <person name="Nakazaki N."/>
            <person name="Shinpo S."/>
            <person name="Takeuchi C."/>
            <person name="Wada T."/>
            <person name="Watanabe A."/>
            <person name="Yamada M."/>
            <person name="Yasuda M."/>
            <person name="Tabata S."/>
        </authorList>
    </citation>
    <scope>NUCLEOTIDE SEQUENCE [LARGE SCALE GENOMIC DNA]</scope>
    <source>
        <strain>cv. Columbia</strain>
    </source>
</reference>
<reference key="2">
    <citation type="journal article" date="2017" name="Plant J.">
        <title>Araport11: a complete reannotation of the Arabidopsis thaliana reference genome.</title>
        <authorList>
            <person name="Cheng C.Y."/>
            <person name="Krishnakumar V."/>
            <person name="Chan A.P."/>
            <person name="Thibaud-Nissen F."/>
            <person name="Schobel S."/>
            <person name="Town C.D."/>
        </authorList>
    </citation>
    <scope>GENOME REANNOTATION</scope>
    <source>
        <strain>cv. Columbia</strain>
    </source>
</reference>
<reference key="3">
    <citation type="submission" date="2006-07" db="EMBL/GenBank/DDBJ databases">
        <title>Large-scale analysis of RIKEN Arabidopsis full-length (RAFL) cDNAs.</title>
        <authorList>
            <person name="Totoki Y."/>
            <person name="Seki M."/>
            <person name="Ishida J."/>
            <person name="Nakajima M."/>
            <person name="Enju A."/>
            <person name="Kamiya A."/>
            <person name="Narusaka M."/>
            <person name="Shin-i T."/>
            <person name="Nakagawa M."/>
            <person name="Sakamoto N."/>
            <person name="Oishi K."/>
            <person name="Kohara Y."/>
            <person name="Kobayashi M."/>
            <person name="Toyoda A."/>
            <person name="Sakaki Y."/>
            <person name="Sakurai T."/>
            <person name="Iida K."/>
            <person name="Akiyama K."/>
            <person name="Satou M."/>
            <person name="Toyoda T."/>
            <person name="Konagaya A."/>
            <person name="Carninci P."/>
            <person name="Kawai J."/>
            <person name="Hayashizaki Y."/>
            <person name="Shinozaki K."/>
        </authorList>
    </citation>
    <scope>NUCLEOTIDE SEQUENCE [LARGE SCALE MRNA]</scope>
    <source>
        <strain>cv. Columbia</strain>
    </source>
</reference>
<feature type="chain" id="PRO_0000215888" description="RNA cytidine acetyltransferase 2">
    <location>
        <begin position="1"/>
        <end position="1028"/>
    </location>
</feature>
<feature type="domain" description="N-acetyltransferase" evidence="1">
    <location>
        <begin position="546"/>
        <end position="729"/>
    </location>
</feature>
<feature type="region of interest" description="Disordered" evidence="2">
    <location>
        <begin position="982"/>
        <end position="1028"/>
    </location>
</feature>
<feature type="compositionally biased region" description="Basic and acidic residues" evidence="2">
    <location>
        <begin position="990"/>
        <end position="1001"/>
    </location>
</feature>
<feature type="compositionally biased region" description="Basic residues" evidence="2">
    <location>
        <begin position="1018"/>
        <end position="1028"/>
    </location>
</feature>
<feature type="binding site" evidence="1">
    <location>
        <begin position="286"/>
        <end position="295"/>
    </location>
    <ligand>
        <name>ATP</name>
        <dbReference type="ChEBI" id="CHEBI:30616"/>
    </ligand>
</feature>
<feature type="binding site" evidence="1">
    <location>
        <position position="458"/>
    </location>
    <ligand>
        <name>ATP</name>
        <dbReference type="ChEBI" id="CHEBI:30616"/>
    </ligand>
</feature>
<feature type="binding site" evidence="1">
    <location>
        <begin position="617"/>
        <end position="619"/>
    </location>
    <ligand>
        <name>acetyl-CoA</name>
        <dbReference type="ChEBI" id="CHEBI:57288"/>
    </ligand>
</feature>
<feature type="binding site" evidence="1">
    <location>
        <begin position="624"/>
        <end position="630"/>
    </location>
    <ligand>
        <name>acetyl-CoA</name>
        <dbReference type="ChEBI" id="CHEBI:57288"/>
    </ligand>
</feature>
<feature type="binding site" evidence="1">
    <location>
        <position position="717"/>
    </location>
    <ligand>
        <name>acetyl-CoA</name>
        <dbReference type="ChEBI" id="CHEBI:57288"/>
    </ligand>
</feature>
<gene>
    <name type="ordered locus">At3g57940</name>
    <name type="ORF">T10K17.150</name>
</gene>
<name>NT102_ARATH</name>
<evidence type="ECO:0000255" key="1">
    <source>
        <dbReference type="HAMAP-Rule" id="MF_03211"/>
    </source>
</evidence>
<evidence type="ECO:0000256" key="2">
    <source>
        <dbReference type="SAM" id="MobiDB-lite"/>
    </source>
</evidence>
<evidence type="ECO:0000305" key="3"/>
<sequence>MRKKVDERIRTLIENGVKLRHRSMFVIIGDKSRDQIVNLHHMLSKAVIKCNPSVLWCYKDKLDISSHKQKRSKQLKRLRERGQLDPEKLDAFSRLLDVGRVTHCLYKDSERILGNTFGMCILQDFEALTPNLLARTIETVEGGGLVVLILRSLTSLTSLCTMVMDVHDRFRTESHSEAAGRFNERFLLSLASCKACVVMDDELNILPLSSHIRSITQVPTEKDSEGLSEAERDLKSLKEDLSDDFPVGPLIKKCCTLDQGKAVVTFFDAILDKALRSIVALIASRGRGKSAALGLAVAGAVAAGYSNIYITAPSPDNLKTFFEFVCKGFDALEYKEHLDYDVVKSANPDFKKAVVRINIFKQHRQTIQYIQPHEHEKLSQVELLVIDEAAAIPLPVVKSLLGPYLVFLSSTVSGYEGTGRSLSLKLLQQLDEQSRAPATGLEGSGCLFKKIELTESIRYGSGDPIESWLNGLLCLDVATCLPNPACHPSPSQCDLYYVNRDTLFSYHKDSELFLQRMMALCVSSHYKNSPNDLQLLADAPAHHLFVLLGPVDESQNKIPDILCVIQVCLEGKISENSALQSLRDGHSPYGDQIPWKFCEQFRDTEFPGFSGARIVRIAVHPNAMKMGYGSAAVELLTRYFEGQIAPISEAEDKVDVEHAPIKVTEAAEKVSMLEEQVKPRTNLPPLLVPLHDRRPEKLHYIGVSFGLTLDLFRFWRKHNFAPFYVSQIPSAVTGEHTCMLLKPLKNDELEVNESDELGFFTPFYKDFKIRFSKLLSDKFKKMDYKLAMSVLNPKINFAEVDSSGSSSGGFLKTLNGILSPYDMERLRAYTENLTDFNLVYDICKTLAHQYFEEKLPVSLSYVQASILLCLGLQETDFSSIERQMQLERGQIHSLLLKVARELYKYLNGVAGKEIKSALPRLKERELTAHNVSVDDDIREGAKQVEEQMKKEKIEGLMDSELQQYVIGDKEAEALQHSKISSSGIISVKSTKSENENGFDKSTKKRSSDKRSSSSSKSKSSKKRKSLKE</sequence>
<dbReference type="EC" id="2.3.1.-" evidence="1"/>
<dbReference type="EMBL" id="AL132977">
    <property type="protein sequence ID" value="CAB67622.1"/>
    <property type="status" value="ALT_SEQ"/>
    <property type="molecule type" value="Genomic_DNA"/>
</dbReference>
<dbReference type="EMBL" id="CP002686">
    <property type="protein sequence ID" value="AEE79720.1"/>
    <property type="molecule type" value="Genomic_DNA"/>
</dbReference>
<dbReference type="EMBL" id="AK229357">
    <property type="protein sequence ID" value="BAF01220.1"/>
    <property type="molecule type" value="mRNA"/>
</dbReference>
<dbReference type="PIR" id="T46016">
    <property type="entry name" value="T46016"/>
</dbReference>
<dbReference type="RefSeq" id="NP_191353.2">
    <molecule id="Q9M2Q4-1"/>
    <property type="nucleotide sequence ID" value="NM_115656.4"/>
</dbReference>
<dbReference type="SMR" id="Q9M2Q4"/>
<dbReference type="BioGRID" id="10278">
    <property type="interactions" value="3"/>
</dbReference>
<dbReference type="FunCoup" id="Q9M2Q4">
    <property type="interactions" value="4186"/>
</dbReference>
<dbReference type="STRING" id="3702.Q9M2Q4"/>
<dbReference type="iPTMnet" id="Q9M2Q4"/>
<dbReference type="PaxDb" id="3702-AT3G57940.1"/>
<dbReference type="ProteomicsDB" id="248936">
    <molecule id="Q9M2Q4-1"/>
</dbReference>
<dbReference type="EnsemblPlants" id="AT3G57940.1">
    <molecule id="Q9M2Q4-1"/>
    <property type="protein sequence ID" value="AT3G57940.1"/>
    <property type="gene ID" value="AT3G57940"/>
</dbReference>
<dbReference type="GeneID" id="824963"/>
<dbReference type="Gramene" id="AT3G57940.1">
    <molecule id="Q9M2Q4-1"/>
    <property type="protein sequence ID" value="AT3G57940.1"/>
    <property type="gene ID" value="AT3G57940"/>
</dbReference>
<dbReference type="KEGG" id="ath:AT3G57940"/>
<dbReference type="Araport" id="AT3G57940"/>
<dbReference type="TAIR" id="AT3G57940"/>
<dbReference type="eggNOG" id="KOG2036">
    <property type="taxonomic scope" value="Eukaryota"/>
</dbReference>
<dbReference type="InParanoid" id="Q9M2Q4"/>
<dbReference type="OMA" id="VGRFNEX"/>
<dbReference type="PhylomeDB" id="Q9M2Q4"/>
<dbReference type="CD-CODE" id="4299E36E">
    <property type="entry name" value="Nucleolus"/>
</dbReference>
<dbReference type="PRO" id="PR:Q9M2Q4"/>
<dbReference type="Proteomes" id="UP000006548">
    <property type="component" value="Chromosome 3"/>
</dbReference>
<dbReference type="ExpressionAtlas" id="Q9M2Q4">
    <property type="expression patterns" value="baseline and differential"/>
</dbReference>
<dbReference type="GO" id="GO:0005730">
    <property type="term" value="C:nucleolus"/>
    <property type="evidence" value="ECO:0007669"/>
    <property type="project" value="UniProtKB-SubCell"/>
</dbReference>
<dbReference type="GO" id="GO:1990883">
    <property type="term" value="F:18S rRNA cytidine N-acetyltransferase activity"/>
    <property type="evidence" value="ECO:0007669"/>
    <property type="project" value="RHEA"/>
</dbReference>
<dbReference type="GO" id="GO:0005524">
    <property type="term" value="F:ATP binding"/>
    <property type="evidence" value="ECO:0007669"/>
    <property type="project" value="UniProtKB-UniRule"/>
</dbReference>
<dbReference type="GO" id="GO:0051392">
    <property type="term" value="F:tRNA N4-acetyltransferase activity"/>
    <property type="evidence" value="ECO:0007669"/>
    <property type="project" value="RHEA"/>
</dbReference>
<dbReference type="GO" id="GO:1904812">
    <property type="term" value="P:rRNA acetylation involved in maturation of SSU-rRNA"/>
    <property type="evidence" value="ECO:0007669"/>
    <property type="project" value="InterPro"/>
</dbReference>
<dbReference type="GO" id="GO:0051391">
    <property type="term" value="P:tRNA acetylation"/>
    <property type="evidence" value="ECO:0007669"/>
    <property type="project" value="UniProtKB-UniRule"/>
</dbReference>
<dbReference type="FunFam" id="3.40.50.300:FF:002218">
    <property type="entry name" value="tRNA(Met) cytidine acetyltransferase TmcA"/>
    <property type="match status" value="1"/>
</dbReference>
<dbReference type="Gene3D" id="3.40.50.11040">
    <property type="match status" value="1"/>
</dbReference>
<dbReference type="Gene3D" id="3.40.630.30">
    <property type="match status" value="1"/>
</dbReference>
<dbReference type="Gene3D" id="3.40.50.300">
    <property type="entry name" value="P-loop containing nucleotide triphosphate hydrolases"/>
    <property type="match status" value="1"/>
</dbReference>
<dbReference type="HAMAP" id="MF_03211">
    <property type="entry name" value="RNA_acetyltr_Nat10"/>
    <property type="match status" value="1"/>
</dbReference>
<dbReference type="InterPro" id="IPR000182">
    <property type="entry name" value="GNAT_dom"/>
</dbReference>
<dbReference type="InterPro" id="IPR033688">
    <property type="entry name" value="NAT10"/>
</dbReference>
<dbReference type="InterPro" id="IPR007807">
    <property type="entry name" value="NAT10/TcmA_helicase"/>
</dbReference>
<dbReference type="InterPro" id="IPR027417">
    <property type="entry name" value="P-loop_NTPase"/>
</dbReference>
<dbReference type="InterPro" id="IPR032672">
    <property type="entry name" value="TmcA/NAT10/Kre33"/>
</dbReference>
<dbReference type="InterPro" id="IPR013562">
    <property type="entry name" value="TmcA_N"/>
</dbReference>
<dbReference type="InterPro" id="IPR027992">
    <property type="entry name" value="tRNA_bind_dom"/>
</dbReference>
<dbReference type="PANTHER" id="PTHR10925">
    <property type="entry name" value="N-ACETYLTRANSFERASE 10"/>
    <property type="match status" value="1"/>
</dbReference>
<dbReference type="PANTHER" id="PTHR10925:SF7">
    <property type="entry name" value="RNA CYTIDINE ACETYLTRANSFERASE 2"/>
    <property type="match status" value="1"/>
</dbReference>
<dbReference type="Pfam" id="PF13718">
    <property type="entry name" value="GNAT_acetyltr_2"/>
    <property type="match status" value="1"/>
</dbReference>
<dbReference type="Pfam" id="PF05127">
    <property type="entry name" value="NAT10_TcmA_helicase"/>
    <property type="match status" value="1"/>
</dbReference>
<dbReference type="Pfam" id="PF08351">
    <property type="entry name" value="TmcA_N"/>
    <property type="match status" value="1"/>
</dbReference>
<dbReference type="Pfam" id="PF13725">
    <property type="entry name" value="tRNA_bind_2"/>
    <property type="match status" value="1"/>
</dbReference>
<organism>
    <name type="scientific">Arabidopsis thaliana</name>
    <name type="common">Mouse-ear cress</name>
    <dbReference type="NCBI Taxonomy" id="3702"/>
    <lineage>
        <taxon>Eukaryota</taxon>
        <taxon>Viridiplantae</taxon>
        <taxon>Streptophyta</taxon>
        <taxon>Embryophyta</taxon>
        <taxon>Tracheophyta</taxon>
        <taxon>Spermatophyta</taxon>
        <taxon>Magnoliopsida</taxon>
        <taxon>eudicotyledons</taxon>
        <taxon>Gunneridae</taxon>
        <taxon>Pentapetalae</taxon>
        <taxon>rosids</taxon>
        <taxon>malvids</taxon>
        <taxon>Brassicales</taxon>
        <taxon>Brassicaceae</taxon>
        <taxon>Camelineae</taxon>
        <taxon>Arabidopsis</taxon>
    </lineage>
</organism>
<proteinExistence type="evidence at transcript level"/>
<accession>Q9M2Q4</accession>
<accession>Q0WNS9</accession>
<comment type="function">
    <text evidence="1">RNA cytidine acetyltransferase with specificity toward both 18S rRNA and tRNAs. Catalyzes the formation of N(4)-acetylcytidine (ac4C) in 18S rRNA. Required for early nucleolar cleavages of precursor rRNA at sites A0, A1 and A2 during 18S rRNA synthesis. Catalyzes the formation of ac4C in serine and leucine tRNAs. Requires a tRNA-binding adapter protein for full tRNA acetyltransferase activity but not for 18S rRNA acetylation.</text>
</comment>
<comment type="catalytic activity">
    <reaction evidence="1">
        <text>a cytidine in 18S rRNA + acetyl-CoA + ATP + H2O = an N(4)-acetylcytidine in 18S rRNA + ADP + phosphate + CoA + H(+)</text>
        <dbReference type="Rhea" id="RHEA:51424"/>
        <dbReference type="Rhea" id="RHEA-COMP:13575"/>
        <dbReference type="Rhea" id="RHEA-COMP:13576"/>
        <dbReference type="ChEBI" id="CHEBI:15377"/>
        <dbReference type="ChEBI" id="CHEBI:15378"/>
        <dbReference type="ChEBI" id="CHEBI:30616"/>
        <dbReference type="ChEBI" id="CHEBI:43474"/>
        <dbReference type="ChEBI" id="CHEBI:57287"/>
        <dbReference type="ChEBI" id="CHEBI:57288"/>
        <dbReference type="ChEBI" id="CHEBI:74900"/>
        <dbReference type="ChEBI" id="CHEBI:82748"/>
        <dbReference type="ChEBI" id="CHEBI:456216"/>
    </reaction>
</comment>
<comment type="catalytic activity">
    <reaction evidence="1">
        <text>a cytidine in tRNA + acetyl-CoA + ATP + H2O = an N(4)-acetylcytidine in tRNA + ADP + phosphate + CoA + H(+)</text>
        <dbReference type="Rhea" id="RHEA:53876"/>
        <dbReference type="Rhea" id="RHEA-COMP:13670"/>
        <dbReference type="Rhea" id="RHEA-COMP:13671"/>
        <dbReference type="ChEBI" id="CHEBI:15377"/>
        <dbReference type="ChEBI" id="CHEBI:15378"/>
        <dbReference type="ChEBI" id="CHEBI:30616"/>
        <dbReference type="ChEBI" id="CHEBI:43474"/>
        <dbReference type="ChEBI" id="CHEBI:57287"/>
        <dbReference type="ChEBI" id="CHEBI:57288"/>
        <dbReference type="ChEBI" id="CHEBI:74900"/>
        <dbReference type="ChEBI" id="CHEBI:82748"/>
        <dbReference type="ChEBI" id="CHEBI:456216"/>
    </reaction>
</comment>
<comment type="subcellular location">
    <subcellularLocation>
        <location evidence="1">Nucleus</location>
        <location evidence="1">Nucleolus</location>
    </subcellularLocation>
</comment>
<comment type="alternative products">
    <event type="alternative splicing"/>
    <isoform>
        <id>Q9M2Q4-1</id>
        <name>1</name>
        <sequence type="displayed"/>
    </isoform>
    <text>A number of isoforms are produced. According to EST sequences.</text>
</comment>
<comment type="similarity">
    <text evidence="1">Belongs to the RNA cytidine acetyltransferase family. NAT10 subfamily.</text>
</comment>
<comment type="sequence caution" evidence="3">
    <conflict type="erroneous gene model prediction">
        <sequence resource="EMBL-CDS" id="CAB67622"/>
    </conflict>
</comment>
<keyword id="KW-0012">Acyltransferase</keyword>
<keyword id="KW-0025">Alternative splicing</keyword>
<keyword id="KW-0067">ATP-binding</keyword>
<keyword id="KW-0547">Nucleotide-binding</keyword>
<keyword id="KW-0539">Nucleus</keyword>
<keyword id="KW-1185">Reference proteome</keyword>
<keyword id="KW-0698">rRNA processing</keyword>
<keyword id="KW-0808">Transferase</keyword>
<keyword id="KW-0819">tRNA processing</keyword>